<proteinExistence type="inferred from homology"/>
<reference key="1">
    <citation type="journal article" date="2006" name="J. Bacteriol.">
        <title>The genome sequence of Methanosphaera stadtmanae reveals why this human intestinal archaeon is restricted to methanol and H2 for methane formation and ATP synthesis.</title>
        <authorList>
            <person name="Fricke W.F."/>
            <person name="Seedorf H."/>
            <person name="Henne A."/>
            <person name="Kruer M."/>
            <person name="Liesegang H."/>
            <person name="Hedderich R."/>
            <person name="Gottschalk G."/>
            <person name="Thauer R.K."/>
        </authorList>
    </citation>
    <scope>NUCLEOTIDE SEQUENCE [LARGE SCALE GENOMIC DNA]</scope>
    <source>
        <strain>ATCC 43021 / DSM 3091 / JCM 11832 / MCB-3</strain>
    </source>
</reference>
<name>SECE_METST</name>
<feature type="chain" id="PRO_0000273138" description="Protein translocase subunit SecE">
    <location>
        <begin position="1"/>
        <end position="61"/>
    </location>
</feature>
<feature type="transmembrane region" description="Helical" evidence="1">
    <location>
        <begin position="39"/>
        <end position="59"/>
    </location>
</feature>
<protein>
    <recommendedName>
        <fullName evidence="1">Protein translocase subunit SecE</fullName>
    </recommendedName>
    <alternativeName>
        <fullName evidence="1">Protein transport protein Sec61 gamma subunit homolog</fullName>
    </alternativeName>
</protein>
<accession>Q2NEV8</accession>
<comment type="function">
    <text evidence="1">Essential subunit of the Sec protein translocation channel SecYEG. Clamps together the 2 halves of SecY. May contact the channel plug during translocation.</text>
</comment>
<comment type="subunit">
    <text evidence="1">Component of the Sec protein translocase complex. Heterotrimer consisting of SecY (alpha), SecG (beta) and SecE (gamma) subunits. The heterotrimers can form oligomers, although 1 heterotrimer is thought to be able to translocate proteins. Interacts with the ribosome. May interact with SecDF, and other proteins may be involved.</text>
</comment>
<comment type="subcellular location">
    <subcellularLocation>
        <location evidence="1">Cell membrane</location>
        <topology evidence="1">Single-pass membrane protein</topology>
    </subcellularLocation>
</comment>
<comment type="similarity">
    <text evidence="1">Belongs to the SecE/SEC61-gamma family.</text>
</comment>
<dbReference type="EMBL" id="CP000102">
    <property type="protein sequence ID" value="ABC57645.1"/>
    <property type="molecule type" value="Genomic_DNA"/>
</dbReference>
<dbReference type="RefSeq" id="WP_011406844.1">
    <property type="nucleotide sequence ID" value="NC_007681.1"/>
</dbReference>
<dbReference type="SMR" id="Q2NEV8"/>
<dbReference type="STRING" id="339860.Msp_1268"/>
<dbReference type="KEGG" id="mst:Msp_1268"/>
<dbReference type="eggNOG" id="arCOG02204">
    <property type="taxonomic scope" value="Archaea"/>
</dbReference>
<dbReference type="HOGENOM" id="CLU_191921_0_1_2"/>
<dbReference type="OrthoDB" id="52835at2157"/>
<dbReference type="Proteomes" id="UP000001931">
    <property type="component" value="Chromosome"/>
</dbReference>
<dbReference type="GO" id="GO:0005886">
    <property type="term" value="C:plasma membrane"/>
    <property type="evidence" value="ECO:0007669"/>
    <property type="project" value="UniProtKB-SubCell"/>
</dbReference>
<dbReference type="GO" id="GO:0008320">
    <property type="term" value="F:protein transmembrane transporter activity"/>
    <property type="evidence" value="ECO:0007669"/>
    <property type="project" value="UniProtKB-UniRule"/>
</dbReference>
<dbReference type="GO" id="GO:0065002">
    <property type="term" value="P:intracellular protein transmembrane transport"/>
    <property type="evidence" value="ECO:0007669"/>
    <property type="project" value="UniProtKB-UniRule"/>
</dbReference>
<dbReference type="GO" id="GO:0009306">
    <property type="term" value="P:protein secretion"/>
    <property type="evidence" value="ECO:0007669"/>
    <property type="project" value="UniProtKB-UniRule"/>
</dbReference>
<dbReference type="GO" id="GO:0006605">
    <property type="term" value="P:protein targeting"/>
    <property type="evidence" value="ECO:0007669"/>
    <property type="project" value="UniProtKB-UniRule"/>
</dbReference>
<dbReference type="Gene3D" id="1.20.5.820">
    <property type="entry name" value="Preprotein translocase SecE subunit"/>
    <property type="match status" value="1"/>
</dbReference>
<dbReference type="HAMAP" id="MF_00422">
    <property type="entry name" value="SecE"/>
    <property type="match status" value="1"/>
</dbReference>
<dbReference type="InterPro" id="IPR023391">
    <property type="entry name" value="Prot_translocase_SecE_dom_sf"/>
</dbReference>
<dbReference type="InterPro" id="IPR008158">
    <property type="entry name" value="Translocase_Sec61-g"/>
</dbReference>
<dbReference type="InterPro" id="IPR001901">
    <property type="entry name" value="Translocase_SecE/Sec61-g"/>
</dbReference>
<dbReference type="NCBIfam" id="NF006909">
    <property type="entry name" value="PRK09400.1-4"/>
    <property type="match status" value="1"/>
</dbReference>
<dbReference type="NCBIfam" id="TIGR00327">
    <property type="entry name" value="secE_euk_arch"/>
    <property type="match status" value="1"/>
</dbReference>
<dbReference type="Pfam" id="PF00584">
    <property type="entry name" value="SecE"/>
    <property type="match status" value="1"/>
</dbReference>
<dbReference type="SUPFAM" id="SSF103456">
    <property type="entry name" value="Preprotein translocase SecE subunit"/>
    <property type="match status" value="1"/>
</dbReference>
<keyword id="KW-1003">Cell membrane</keyword>
<keyword id="KW-0472">Membrane</keyword>
<keyword id="KW-0653">Protein transport</keyword>
<keyword id="KW-1185">Reference proteome</keyword>
<keyword id="KW-0811">Translocation</keyword>
<keyword id="KW-0812">Transmembrane</keyword>
<keyword id="KW-1133">Transmembrane helix</keyword>
<keyword id="KW-0813">Transport</keyword>
<evidence type="ECO:0000255" key="1">
    <source>
        <dbReference type="HAMAP-Rule" id="MF_00422"/>
    </source>
</evidence>
<sequence>MNINKESIHGFLKQCERVLRISKKPDNEEYLTVAKVTGVGIIIIGLIGFILSIVSQVLFYS</sequence>
<gene>
    <name evidence="1" type="primary">secE</name>
    <name type="ordered locus">Msp_1268</name>
</gene>
<organism>
    <name type="scientific">Methanosphaera stadtmanae (strain ATCC 43021 / DSM 3091 / JCM 11832 / MCB-3)</name>
    <dbReference type="NCBI Taxonomy" id="339860"/>
    <lineage>
        <taxon>Archaea</taxon>
        <taxon>Methanobacteriati</taxon>
        <taxon>Methanobacteriota</taxon>
        <taxon>Methanomada group</taxon>
        <taxon>Methanobacteria</taxon>
        <taxon>Methanobacteriales</taxon>
        <taxon>Methanobacteriaceae</taxon>
        <taxon>Methanosphaera</taxon>
    </lineage>
</organism>